<comment type="function">
    <text evidence="1 5 6">Plays a role in mitochondrial and peroxisomal fission (PubMed:23283981, PubMed:30059978). Promotes the recruitment and association of the fission mediator dynamin-related protein 1 (DNM1L) to the mitochondrial surface (PubMed:23283981). May be involved in regulation of synaptic vesicle membrane dynamics by recruitment of DNM1L to clathrin-containing vesicles (By similarity).</text>
</comment>
<comment type="subunit">
    <text evidence="6">Homodimer (PubMed:30059978). Interacts with DNM1L (PubMed:30059978). Interacts with C11orf65/MFI; the interaction inhibits MFF interaction with DNM1L (PubMed:30059978).</text>
</comment>
<comment type="interaction">
    <interactant intactId="EBI-21985996">
        <id>Q6PCP5</id>
    </interactant>
    <interactant intactId="EBI-2365792">
        <id>Q8K1M6</id>
        <label>Dnm1l</label>
    </interactant>
    <organismsDiffer>false</organismsDiffer>
    <experiments>2</experiments>
</comment>
<comment type="subcellular location">
    <subcellularLocation>
        <location evidence="6">Mitochondrion outer membrane</location>
        <topology evidence="3">Single-pass type IV membrane protein</topology>
    </subcellularLocation>
    <subcellularLocation>
        <location evidence="2">Peroxisome</location>
    </subcellularLocation>
    <subcellularLocation>
        <location evidence="1">Cytoplasmic vesicle</location>
        <location evidence="1">Secretory vesicle</location>
        <location evidence="1">Synaptic vesicle</location>
    </subcellularLocation>
</comment>
<comment type="alternative products">
    <event type="alternative splicing"/>
    <isoform>
        <id>Q6PCP5-1</id>
        <name>1</name>
        <sequence type="displayed"/>
    </isoform>
    <isoform>
        <id>Q6PCP5-2</id>
        <name>2</name>
        <sequence type="described" ref="VSP_025959 VSP_025961"/>
    </isoform>
    <isoform>
        <id>Q6PCP5-3</id>
        <name>3</name>
        <sequence type="described" ref="VSP_025961"/>
    </isoform>
    <isoform>
        <id>Q6PCP5-4</id>
        <name>4</name>
        <sequence type="described" ref="VSP_025960"/>
    </isoform>
</comment>
<comment type="similarity">
    <text evidence="9">Belongs to the Tango11 family.</text>
</comment>
<reference key="1">
    <citation type="journal article" date="2005" name="Science">
        <title>The transcriptional landscape of the mammalian genome.</title>
        <authorList>
            <person name="Carninci P."/>
            <person name="Kasukawa T."/>
            <person name="Katayama S."/>
            <person name="Gough J."/>
            <person name="Frith M.C."/>
            <person name="Maeda N."/>
            <person name="Oyama R."/>
            <person name="Ravasi T."/>
            <person name="Lenhard B."/>
            <person name="Wells C."/>
            <person name="Kodzius R."/>
            <person name="Shimokawa K."/>
            <person name="Bajic V.B."/>
            <person name="Brenner S.E."/>
            <person name="Batalov S."/>
            <person name="Forrest A.R."/>
            <person name="Zavolan M."/>
            <person name="Davis M.J."/>
            <person name="Wilming L.G."/>
            <person name="Aidinis V."/>
            <person name="Allen J.E."/>
            <person name="Ambesi-Impiombato A."/>
            <person name="Apweiler R."/>
            <person name="Aturaliya R.N."/>
            <person name="Bailey T.L."/>
            <person name="Bansal M."/>
            <person name="Baxter L."/>
            <person name="Beisel K.W."/>
            <person name="Bersano T."/>
            <person name="Bono H."/>
            <person name="Chalk A.M."/>
            <person name="Chiu K.P."/>
            <person name="Choudhary V."/>
            <person name="Christoffels A."/>
            <person name="Clutterbuck D.R."/>
            <person name="Crowe M.L."/>
            <person name="Dalla E."/>
            <person name="Dalrymple B.P."/>
            <person name="de Bono B."/>
            <person name="Della Gatta G."/>
            <person name="di Bernardo D."/>
            <person name="Down T."/>
            <person name="Engstrom P."/>
            <person name="Fagiolini M."/>
            <person name="Faulkner G."/>
            <person name="Fletcher C.F."/>
            <person name="Fukushima T."/>
            <person name="Furuno M."/>
            <person name="Futaki S."/>
            <person name="Gariboldi M."/>
            <person name="Georgii-Hemming P."/>
            <person name="Gingeras T.R."/>
            <person name="Gojobori T."/>
            <person name="Green R.E."/>
            <person name="Gustincich S."/>
            <person name="Harbers M."/>
            <person name="Hayashi Y."/>
            <person name="Hensch T.K."/>
            <person name="Hirokawa N."/>
            <person name="Hill D."/>
            <person name="Huminiecki L."/>
            <person name="Iacono M."/>
            <person name="Ikeo K."/>
            <person name="Iwama A."/>
            <person name="Ishikawa T."/>
            <person name="Jakt M."/>
            <person name="Kanapin A."/>
            <person name="Katoh M."/>
            <person name="Kawasawa Y."/>
            <person name="Kelso J."/>
            <person name="Kitamura H."/>
            <person name="Kitano H."/>
            <person name="Kollias G."/>
            <person name="Krishnan S.P."/>
            <person name="Kruger A."/>
            <person name="Kummerfeld S.K."/>
            <person name="Kurochkin I.V."/>
            <person name="Lareau L.F."/>
            <person name="Lazarevic D."/>
            <person name="Lipovich L."/>
            <person name="Liu J."/>
            <person name="Liuni S."/>
            <person name="McWilliam S."/>
            <person name="Madan Babu M."/>
            <person name="Madera M."/>
            <person name="Marchionni L."/>
            <person name="Matsuda H."/>
            <person name="Matsuzawa S."/>
            <person name="Miki H."/>
            <person name="Mignone F."/>
            <person name="Miyake S."/>
            <person name="Morris K."/>
            <person name="Mottagui-Tabar S."/>
            <person name="Mulder N."/>
            <person name="Nakano N."/>
            <person name="Nakauchi H."/>
            <person name="Ng P."/>
            <person name="Nilsson R."/>
            <person name="Nishiguchi S."/>
            <person name="Nishikawa S."/>
            <person name="Nori F."/>
            <person name="Ohara O."/>
            <person name="Okazaki Y."/>
            <person name="Orlando V."/>
            <person name="Pang K.C."/>
            <person name="Pavan W.J."/>
            <person name="Pavesi G."/>
            <person name="Pesole G."/>
            <person name="Petrovsky N."/>
            <person name="Piazza S."/>
            <person name="Reed J."/>
            <person name="Reid J.F."/>
            <person name="Ring B.Z."/>
            <person name="Ringwald M."/>
            <person name="Rost B."/>
            <person name="Ruan Y."/>
            <person name="Salzberg S.L."/>
            <person name="Sandelin A."/>
            <person name="Schneider C."/>
            <person name="Schoenbach C."/>
            <person name="Sekiguchi K."/>
            <person name="Semple C.A."/>
            <person name="Seno S."/>
            <person name="Sessa L."/>
            <person name="Sheng Y."/>
            <person name="Shibata Y."/>
            <person name="Shimada H."/>
            <person name="Shimada K."/>
            <person name="Silva D."/>
            <person name="Sinclair B."/>
            <person name="Sperling S."/>
            <person name="Stupka E."/>
            <person name="Sugiura K."/>
            <person name="Sultana R."/>
            <person name="Takenaka Y."/>
            <person name="Taki K."/>
            <person name="Tammoja K."/>
            <person name="Tan S.L."/>
            <person name="Tang S."/>
            <person name="Taylor M.S."/>
            <person name="Tegner J."/>
            <person name="Teichmann S.A."/>
            <person name="Ueda H.R."/>
            <person name="van Nimwegen E."/>
            <person name="Verardo R."/>
            <person name="Wei C.L."/>
            <person name="Yagi K."/>
            <person name="Yamanishi H."/>
            <person name="Zabarovsky E."/>
            <person name="Zhu S."/>
            <person name="Zimmer A."/>
            <person name="Hide W."/>
            <person name="Bult C."/>
            <person name="Grimmond S.M."/>
            <person name="Teasdale R.D."/>
            <person name="Liu E.T."/>
            <person name="Brusic V."/>
            <person name="Quackenbush J."/>
            <person name="Wahlestedt C."/>
            <person name="Mattick J.S."/>
            <person name="Hume D.A."/>
            <person name="Kai C."/>
            <person name="Sasaki D."/>
            <person name="Tomaru Y."/>
            <person name="Fukuda S."/>
            <person name="Kanamori-Katayama M."/>
            <person name="Suzuki M."/>
            <person name="Aoki J."/>
            <person name="Arakawa T."/>
            <person name="Iida J."/>
            <person name="Imamura K."/>
            <person name="Itoh M."/>
            <person name="Kato T."/>
            <person name="Kawaji H."/>
            <person name="Kawagashira N."/>
            <person name="Kawashima T."/>
            <person name="Kojima M."/>
            <person name="Kondo S."/>
            <person name="Konno H."/>
            <person name="Nakano K."/>
            <person name="Ninomiya N."/>
            <person name="Nishio T."/>
            <person name="Okada M."/>
            <person name="Plessy C."/>
            <person name="Shibata K."/>
            <person name="Shiraki T."/>
            <person name="Suzuki S."/>
            <person name="Tagami M."/>
            <person name="Waki K."/>
            <person name="Watahiki A."/>
            <person name="Okamura-Oho Y."/>
            <person name="Suzuki H."/>
            <person name="Kawai J."/>
            <person name="Hayashizaki Y."/>
        </authorList>
    </citation>
    <scope>NUCLEOTIDE SEQUENCE [LARGE SCALE MRNA] (ISOFORMS 2 AND 3)</scope>
    <source>
        <strain>C57BL/6J</strain>
        <tissue>Egg</tissue>
        <tissue>Xiphoid cartilage</tissue>
    </source>
</reference>
<reference key="2">
    <citation type="journal article" date="2004" name="Genome Res.">
        <title>The status, quality, and expansion of the NIH full-length cDNA project: the Mammalian Gene Collection (MGC).</title>
        <authorList>
            <consortium name="The MGC Project Team"/>
        </authorList>
    </citation>
    <scope>NUCLEOTIDE SEQUENCE [LARGE SCALE MRNA] (ISOFORMS 1 AND 4)</scope>
    <source>
        <strain>C57BL/6J</strain>
        <strain>FVB/N</strain>
        <tissue>Brain</tissue>
        <tissue>Mammary tumor</tissue>
    </source>
</reference>
<reference key="3">
    <citation type="journal article" date="2007" name="Mol. Cell. Proteomics">
        <title>Mitochondrial phosphoproteome revealed by an improved IMAC method and MS/MS/MS.</title>
        <authorList>
            <person name="Lee J."/>
            <person name="Xu Y."/>
            <person name="Chen Y."/>
            <person name="Sprung R."/>
            <person name="Kim S.C."/>
            <person name="Xie S."/>
            <person name="Zhao Y."/>
        </authorList>
    </citation>
    <scope>PHOSPHORYLATION [LARGE SCALE ANALYSIS] AT SER-131</scope>
    <scope>IDENTIFICATION BY MASS SPECTROMETRY [LARGE SCALE ANALYSIS]</scope>
    <source>
        <tissue>Liver</tissue>
    </source>
</reference>
<reference key="4">
    <citation type="journal article" date="2007" name="Proc. Natl. Acad. Sci. U.S.A.">
        <title>Large-scale phosphorylation analysis of mouse liver.</title>
        <authorList>
            <person name="Villen J."/>
            <person name="Beausoleil S.A."/>
            <person name="Gerber S.A."/>
            <person name="Gygi S.P."/>
        </authorList>
    </citation>
    <scope>PHOSPHORYLATION [LARGE SCALE ANALYSIS] AT SER-146</scope>
    <scope>IDENTIFICATION BY MASS SPECTROMETRY [LARGE SCALE ANALYSIS]</scope>
    <source>
        <tissue>Liver</tissue>
    </source>
</reference>
<reference key="5">
    <citation type="journal article" date="2010" name="Cell">
        <title>A tissue-specific atlas of mouse protein phosphorylation and expression.</title>
        <authorList>
            <person name="Huttlin E.L."/>
            <person name="Jedrychowski M.P."/>
            <person name="Elias J.E."/>
            <person name="Goswami T."/>
            <person name="Rad R."/>
            <person name="Beausoleil S.A."/>
            <person name="Villen J."/>
            <person name="Haas W."/>
            <person name="Sowa M.E."/>
            <person name="Gygi S.P."/>
        </authorList>
    </citation>
    <scope>PHOSPHORYLATION [LARGE SCALE ANALYSIS] AT THR-89; SER-146; THR-149; SER-151 AND SER-244</scope>
    <scope>PHOSPHORYLATION [LARGE SCALE ANALYSIS] AT SER-146 (ISOFORM 4)</scope>
    <scope>IDENTIFICATION BY MASS SPECTROMETRY [LARGE SCALE ANALYSIS]</scope>
    <source>
        <tissue>Brain</tissue>
        <tissue>Brown adipose tissue</tissue>
        <tissue>Heart</tissue>
        <tissue>Kidney</tissue>
        <tissue>Lung</tissue>
        <tissue>Spleen</tissue>
        <tissue>Testis</tissue>
    </source>
</reference>
<reference key="6">
    <citation type="journal article" date="2013" name="Mol. Biol. Cell">
        <title>Fis1, Mff, MiD49, and MiD51 mediate Drp1 recruitment in mitochondrial fission.</title>
        <authorList>
            <person name="Loson O.C."/>
            <person name="Song Z."/>
            <person name="Chen H."/>
            <person name="Chan D.C."/>
        </authorList>
    </citation>
    <scope>FUNCTION</scope>
</reference>
<reference key="7">
    <citation type="journal article" date="2018" name="Endocrinology">
        <title>A Genetic Interaction Map of Insulin Production Identifies Mfi as an Inhibitor of Mitochondrial Fission.</title>
        <authorList>
            <person name="Lee J."/>
            <person name="Pappalardo Z."/>
            <person name="Chopra D.G."/>
            <person name="Hennings T.G."/>
            <person name="Vaughn I."/>
            <person name="Lan C."/>
            <person name="Choe J.J."/>
            <person name="Ang K."/>
            <person name="Chen S."/>
            <person name="Arkin M."/>
            <person name="McManus M.T."/>
            <person name="German M.S."/>
            <person name="Ku G.M."/>
        </authorList>
    </citation>
    <scope>INTERACTION WITH C11ORF65 AND DNM1L</scope>
    <scope>FUNCTION</scope>
    <scope>SUBCELLULAR LOCATION</scope>
</reference>
<accession>Q6PCP5</accession>
<accession>Q3UT87</accession>
<accession>Q91VG0</accession>
<accession>Q9D3P5</accession>
<feature type="chain" id="PRO_0000289185" description="Mitochondrial fission factor">
    <location>
        <begin position="1"/>
        <end position="291"/>
    </location>
</feature>
<feature type="topological domain" description="Cytoplasmic" evidence="3">
    <location>
        <begin position="1"/>
        <end position="271"/>
    </location>
</feature>
<feature type="transmembrane region" description="Helical; Anchor for type IV membrane protein" evidence="3">
    <location>
        <begin position="272"/>
        <end position="289"/>
    </location>
</feature>
<feature type="topological domain" description="Mitochondrial intermembrane" evidence="3">
    <location>
        <begin position="290"/>
        <end position="291"/>
    </location>
</feature>
<feature type="region of interest" description="Disordered" evidence="4">
    <location>
        <begin position="106"/>
        <end position="134"/>
    </location>
</feature>
<feature type="coiled-coil region" evidence="3">
    <location>
        <begin position="240"/>
        <end position="271"/>
    </location>
</feature>
<feature type="modified residue" description="Phosphothreonine" evidence="12">
    <location>
        <position position="89"/>
    </location>
</feature>
<feature type="modified residue" description="Phosphoserine" evidence="2">
    <location>
        <position position="129"/>
    </location>
</feature>
<feature type="modified residue" description="Phosphoserine" evidence="10">
    <location>
        <position position="131"/>
    </location>
</feature>
<feature type="modified residue" description="Phosphoserine" evidence="11 12">
    <location>
        <position position="146"/>
    </location>
</feature>
<feature type="modified residue" description="Phosphothreonine" evidence="12">
    <location>
        <position position="149"/>
    </location>
</feature>
<feature type="modified residue" description="Phosphoserine" evidence="12">
    <location>
        <position position="151"/>
    </location>
</feature>
<feature type="modified residue" description="Phosphoserine" evidence="2">
    <location>
        <position position="178"/>
    </location>
</feature>
<feature type="modified residue" description="Phosphoserine" evidence="2">
    <location>
        <position position="182"/>
    </location>
</feature>
<feature type="modified residue" description="Phosphoserine" evidence="12">
    <location>
        <position position="244"/>
    </location>
</feature>
<feature type="splice variant" id="VSP_025959" description="In isoform 2." evidence="8">
    <original>E</original>
    <variation>EQ</variation>
    <location>
        <position position="117"/>
    </location>
</feature>
<feature type="splice variant" id="VSP_025960" description="In isoform 4." evidence="7">
    <original>IVTPSPPQARVCPPHMLPEDGANLSSARGILSLIQSSTRRAYQQILDVLDENRRPVLRGGSAAATSNPHHDNVR</original>
    <variation>M</variation>
    <location>
        <begin position="147"/>
        <end position="220"/>
    </location>
</feature>
<feature type="splice variant" id="VSP_025961" description="In isoform 2 and isoform 3." evidence="8">
    <location>
        <begin position="148"/>
        <end position="200"/>
    </location>
</feature>
<feature type="modified residue" description="Phosphoserine" evidence="12">
    <location sequence="Q6PCP5-4">
        <position position="146"/>
    </location>
</feature>
<protein>
    <recommendedName>
        <fullName>Mitochondrial fission factor</fullName>
    </recommendedName>
</protein>
<gene>
    <name type="primary">Mff</name>
</gene>
<evidence type="ECO:0000250" key="1">
    <source>
        <dbReference type="UniProtKB" id="Q4KM98"/>
    </source>
</evidence>
<evidence type="ECO:0000250" key="2">
    <source>
        <dbReference type="UniProtKB" id="Q9GZY8"/>
    </source>
</evidence>
<evidence type="ECO:0000255" key="3"/>
<evidence type="ECO:0000256" key="4">
    <source>
        <dbReference type="SAM" id="MobiDB-lite"/>
    </source>
</evidence>
<evidence type="ECO:0000269" key="5">
    <source>
    </source>
</evidence>
<evidence type="ECO:0000269" key="6">
    <source>
    </source>
</evidence>
<evidence type="ECO:0000303" key="7">
    <source>
    </source>
</evidence>
<evidence type="ECO:0000303" key="8">
    <source>
    </source>
</evidence>
<evidence type="ECO:0000305" key="9"/>
<evidence type="ECO:0007744" key="10">
    <source>
    </source>
</evidence>
<evidence type="ECO:0007744" key="11">
    <source>
    </source>
</evidence>
<evidence type="ECO:0007744" key="12">
    <source>
    </source>
</evidence>
<name>MFF_MOUSE</name>
<organism>
    <name type="scientific">Mus musculus</name>
    <name type="common">Mouse</name>
    <dbReference type="NCBI Taxonomy" id="10090"/>
    <lineage>
        <taxon>Eukaryota</taxon>
        <taxon>Metazoa</taxon>
        <taxon>Chordata</taxon>
        <taxon>Craniata</taxon>
        <taxon>Vertebrata</taxon>
        <taxon>Euteleostomi</taxon>
        <taxon>Mammalia</taxon>
        <taxon>Eutheria</taxon>
        <taxon>Euarchontoglires</taxon>
        <taxon>Glires</taxon>
        <taxon>Rodentia</taxon>
        <taxon>Myomorpha</taxon>
        <taxon>Muroidea</taxon>
        <taxon>Muridae</taxon>
        <taxon>Murinae</taxon>
        <taxon>Mus</taxon>
        <taxon>Mus</taxon>
    </lineage>
</organism>
<proteinExistence type="evidence at protein level"/>
<sequence>MAEISRIQYEMEYTEGISQRMRVPEKLKVAPPNADLEQEFQDGVPNASVIMQVPERIVVTGNNEDISFSRPADLDLIQSTPFKPLALKTPPRVLTLSERPLDFLDLERPLPTPQSEESRAVGRLKRERSMSENAVRQNGQLVRNDSIVTPSPPQARVCPPHMLPEDGANLSSARGILSLIQSSTRRAYQQILDVLDENRRPVLRGGSAAATSNPHHDNVRYGISNLDAAIEGASDDMTVVDAASLRRQIIKLNRRLQLLEEENKERAKREMVMYSITVAFWLLNSWLWFRR</sequence>
<dbReference type="EMBL" id="AK017226">
    <property type="protein sequence ID" value="BAB30643.1"/>
    <property type="molecule type" value="mRNA"/>
</dbReference>
<dbReference type="EMBL" id="AK139649">
    <property type="protein sequence ID" value="BAE24093.1"/>
    <property type="molecule type" value="mRNA"/>
</dbReference>
<dbReference type="EMBL" id="BC016597">
    <property type="protein sequence ID" value="AAH16597.1"/>
    <property type="molecule type" value="mRNA"/>
</dbReference>
<dbReference type="EMBL" id="BC059229">
    <property type="protein sequence ID" value="AAH59229.1"/>
    <property type="molecule type" value="mRNA"/>
</dbReference>
<dbReference type="CCDS" id="CCDS15098.1">
    <molecule id="Q6PCP5-1"/>
</dbReference>
<dbReference type="CCDS" id="CCDS78630.1">
    <molecule id="Q6PCP5-2"/>
</dbReference>
<dbReference type="CCDS" id="CCDS78631.1">
    <molecule id="Q6PCP5-3"/>
</dbReference>
<dbReference type="CCDS" id="CCDS78632.1">
    <molecule id="Q6PCP5-4"/>
</dbReference>
<dbReference type="RefSeq" id="NP_001297624.1">
    <molecule id="Q6PCP5-2"/>
    <property type="nucleotide sequence ID" value="NM_001310695.1"/>
</dbReference>
<dbReference type="RefSeq" id="NP_001297626.1">
    <molecule id="Q6PCP5-3"/>
    <property type="nucleotide sequence ID" value="NM_001310697.1"/>
</dbReference>
<dbReference type="RefSeq" id="NP_001297628.1">
    <molecule id="Q6PCP5-4"/>
    <property type="nucleotide sequence ID" value="NM_001310699.1"/>
</dbReference>
<dbReference type="RefSeq" id="NP_083685.2">
    <molecule id="Q6PCP5-1"/>
    <property type="nucleotide sequence ID" value="NM_029409.3"/>
</dbReference>
<dbReference type="SMR" id="Q6PCP5"/>
<dbReference type="BioGRID" id="217700">
    <property type="interactions" value="3"/>
</dbReference>
<dbReference type="CORUM" id="Q6PCP5"/>
<dbReference type="FunCoup" id="Q6PCP5">
    <property type="interactions" value="2981"/>
</dbReference>
<dbReference type="IntAct" id="Q6PCP5">
    <property type="interactions" value="1"/>
</dbReference>
<dbReference type="STRING" id="10090.ENSMUSP00000077446"/>
<dbReference type="GlyGen" id="Q6PCP5">
    <property type="glycosylation" value="3 sites, 1 N-linked glycan (1 site), 1 O-linked glycan (1 site)"/>
</dbReference>
<dbReference type="iPTMnet" id="Q6PCP5"/>
<dbReference type="PhosphoSitePlus" id="Q6PCP5"/>
<dbReference type="SwissPalm" id="Q6PCP5"/>
<dbReference type="jPOST" id="Q6PCP5"/>
<dbReference type="PaxDb" id="10090-ENSMUSP00000077446"/>
<dbReference type="PeptideAtlas" id="Q6PCP5"/>
<dbReference type="ProteomicsDB" id="292304">
    <molecule id="Q6PCP5-1"/>
</dbReference>
<dbReference type="ProteomicsDB" id="292305">
    <molecule id="Q6PCP5-2"/>
</dbReference>
<dbReference type="ProteomicsDB" id="292306">
    <molecule id="Q6PCP5-3"/>
</dbReference>
<dbReference type="ProteomicsDB" id="292307">
    <molecule id="Q6PCP5-4"/>
</dbReference>
<dbReference type="Pumba" id="Q6PCP5"/>
<dbReference type="ABCD" id="Q6PCP5">
    <property type="antibodies" value="2 sequenced antibodies"/>
</dbReference>
<dbReference type="Antibodypedia" id="2600">
    <property type="antibodies" value="223 antibodies from 32 providers"/>
</dbReference>
<dbReference type="DNASU" id="75734"/>
<dbReference type="Ensembl" id="ENSMUST00000073025.12">
    <molecule id="Q6PCP5-2"/>
    <property type="protein sequence ID" value="ENSMUSP00000072784.6"/>
    <property type="gene ID" value="ENSMUSG00000026150.15"/>
</dbReference>
<dbReference type="Ensembl" id="ENSMUST00000078332.13">
    <molecule id="Q6PCP5-1"/>
    <property type="protein sequence ID" value="ENSMUSP00000077446.7"/>
    <property type="gene ID" value="ENSMUSG00000026150.15"/>
</dbReference>
<dbReference type="Ensembl" id="ENSMUST00000160786.8">
    <molecule id="Q6PCP5-3"/>
    <property type="protein sequence ID" value="ENSMUSP00000125230.2"/>
    <property type="gene ID" value="ENSMUSG00000026150.15"/>
</dbReference>
<dbReference type="Ensembl" id="ENSMUST00000160972.8">
    <molecule id="Q6PCP5-4"/>
    <property type="protein sequence ID" value="ENSMUSP00000124200.2"/>
    <property type="gene ID" value="ENSMUSG00000026150.15"/>
</dbReference>
<dbReference type="GeneID" id="75734"/>
<dbReference type="KEGG" id="mmu:75734"/>
<dbReference type="UCSC" id="uc007brx.1">
    <molecule id="Q6PCP5-1"/>
    <property type="organism name" value="mouse"/>
</dbReference>
<dbReference type="UCSC" id="uc007bry.1">
    <molecule id="Q6PCP5-3"/>
    <property type="organism name" value="mouse"/>
</dbReference>
<dbReference type="UCSC" id="uc007brz.1">
    <molecule id="Q6PCP5-2"/>
    <property type="organism name" value="mouse"/>
</dbReference>
<dbReference type="UCSC" id="uc007bsc.1">
    <molecule id="Q6PCP5-4"/>
    <property type="organism name" value="mouse"/>
</dbReference>
<dbReference type="AGR" id="MGI:1922984"/>
<dbReference type="CTD" id="56947"/>
<dbReference type="MGI" id="MGI:1922984">
    <property type="gene designation" value="Mff"/>
</dbReference>
<dbReference type="VEuPathDB" id="HostDB:ENSMUSG00000026150"/>
<dbReference type="eggNOG" id="ENOG502R96B">
    <property type="taxonomic scope" value="Eukaryota"/>
</dbReference>
<dbReference type="GeneTree" id="ENSGT00390000009776"/>
<dbReference type="HOGENOM" id="CLU_066026_0_0_1"/>
<dbReference type="InParanoid" id="Q6PCP5"/>
<dbReference type="OMA" id="ERIVVAX"/>
<dbReference type="PhylomeDB" id="Q6PCP5"/>
<dbReference type="TreeFam" id="TF325506"/>
<dbReference type="BioGRID-ORCS" id="75734">
    <property type="hits" value="2 hits in 77 CRISPR screens"/>
</dbReference>
<dbReference type="CD-CODE" id="CE726F99">
    <property type="entry name" value="Postsynaptic density"/>
</dbReference>
<dbReference type="ChiTaRS" id="Mff">
    <property type="organism name" value="mouse"/>
</dbReference>
<dbReference type="PRO" id="PR:Q6PCP5"/>
<dbReference type="Proteomes" id="UP000000589">
    <property type="component" value="Chromosome 1"/>
</dbReference>
<dbReference type="RNAct" id="Q6PCP5">
    <property type="molecule type" value="protein"/>
</dbReference>
<dbReference type="Bgee" id="ENSMUSG00000026150">
    <property type="expression patterns" value="Expressed in choroid plexus epithelium and 260 other cell types or tissues"/>
</dbReference>
<dbReference type="ExpressionAtlas" id="Q6PCP5">
    <property type="expression patterns" value="baseline and differential"/>
</dbReference>
<dbReference type="GO" id="GO:0005741">
    <property type="term" value="C:mitochondrial outer membrane"/>
    <property type="evidence" value="ECO:0000314"/>
    <property type="project" value="UniProtKB"/>
</dbReference>
<dbReference type="GO" id="GO:0005739">
    <property type="term" value="C:mitochondrion"/>
    <property type="evidence" value="ECO:0000314"/>
    <property type="project" value="UniProtKB"/>
</dbReference>
<dbReference type="GO" id="GO:0005777">
    <property type="term" value="C:peroxisome"/>
    <property type="evidence" value="ECO:0000314"/>
    <property type="project" value="UniProtKB"/>
</dbReference>
<dbReference type="GO" id="GO:0032991">
    <property type="term" value="C:protein-containing complex"/>
    <property type="evidence" value="ECO:0007669"/>
    <property type="project" value="Ensembl"/>
</dbReference>
<dbReference type="GO" id="GO:0008021">
    <property type="term" value="C:synaptic vesicle"/>
    <property type="evidence" value="ECO:0007669"/>
    <property type="project" value="UniProtKB-SubCell"/>
</dbReference>
<dbReference type="GO" id="GO:0042803">
    <property type="term" value="F:protein homodimerization activity"/>
    <property type="evidence" value="ECO:0000250"/>
    <property type="project" value="UniProtKB"/>
</dbReference>
<dbReference type="GO" id="GO:0000266">
    <property type="term" value="P:mitochondrial fission"/>
    <property type="evidence" value="ECO:0000314"/>
    <property type="project" value="UniProtKB"/>
</dbReference>
<dbReference type="GO" id="GO:0007005">
    <property type="term" value="P:mitochondrion organization"/>
    <property type="evidence" value="ECO:0000266"/>
    <property type="project" value="MGI"/>
</dbReference>
<dbReference type="GO" id="GO:0016559">
    <property type="term" value="P:peroxisome fission"/>
    <property type="evidence" value="ECO:0007669"/>
    <property type="project" value="Ensembl"/>
</dbReference>
<dbReference type="GO" id="GO:0006626">
    <property type="term" value="P:protein targeting to mitochondrion"/>
    <property type="evidence" value="ECO:0000314"/>
    <property type="project" value="UniProtKB"/>
</dbReference>
<dbReference type="InterPro" id="IPR039433">
    <property type="entry name" value="Mff-like_dom"/>
</dbReference>
<dbReference type="InterPro" id="IPR008518">
    <property type="entry name" value="Mff/Tango-11"/>
</dbReference>
<dbReference type="PANTHER" id="PTHR16501:SF17">
    <property type="entry name" value="MITOCHONDRIAL FISSION FACTOR"/>
    <property type="match status" value="1"/>
</dbReference>
<dbReference type="PANTHER" id="PTHR16501">
    <property type="entry name" value="TRANSPORT AND GOLGI ORGANIZATION PROTEIN 11"/>
    <property type="match status" value="1"/>
</dbReference>
<dbReference type="Pfam" id="PF05644">
    <property type="entry name" value="Miff"/>
    <property type="match status" value="1"/>
</dbReference>
<keyword id="KW-0025">Alternative splicing</keyword>
<keyword id="KW-0175">Coiled coil</keyword>
<keyword id="KW-0968">Cytoplasmic vesicle</keyword>
<keyword id="KW-0472">Membrane</keyword>
<keyword id="KW-0496">Mitochondrion</keyword>
<keyword id="KW-1000">Mitochondrion outer membrane</keyword>
<keyword id="KW-0576">Peroxisome</keyword>
<keyword id="KW-0597">Phosphoprotein</keyword>
<keyword id="KW-1185">Reference proteome</keyword>
<keyword id="KW-0770">Synapse</keyword>
<keyword id="KW-0812">Transmembrane</keyword>
<keyword id="KW-1133">Transmembrane helix</keyword>